<keyword id="KW-0963">Cytoplasm</keyword>
<keyword id="KW-0413">Isomerase</keyword>
<keyword id="KW-0464">Manganese</keyword>
<keyword id="KW-0479">Metal-binding</keyword>
<keyword id="KW-1185">Reference proteome</keyword>
<dbReference type="EC" id="5.4.2.7" evidence="1"/>
<dbReference type="EMBL" id="CP001616">
    <property type="protein sequence ID" value="ACQ94192.1"/>
    <property type="molecule type" value="Genomic_DNA"/>
</dbReference>
<dbReference type="RefSeq" id="WP_015879641.1">
    <property type="nucleotide sequence ID" value="NC_012691.1"/>
</dbReference>
<dbReference type="SMR" id="C4LAY9"/>
<dbReference type="STRING" id="595494.Tola_2598"/>
<dbReference type="KEGG" id="tau:Tola_2598"/>
<dbReference type="eggNOG" id="COG1015">
    <property type="taxonomic scope" value="Bacteria"/>
</dbReference>
<dbReference type="HOGENOM" id="CLU_053861_0_0_6"/>
<dbReference type="OrthoDB" id="9769930at2"/>
<dbReference type="UniPathway" id="UPA00002">
    <property type="reaction ID" value="UER00467"/>
</dbReference>
<dbReference type="Proteomes" id="UP000009073">
    <property type="component" value="Chromosome"/>
</dbReference>
<dbReference type="GO" id="GO:0005829">
    <property type="term" value="C:cytosol"/>
    <property type="evidence" value="ECO:0007669"/>
    <property type="project" value="TreeGrafter"/>
</dbReference>
<dbReference type="GO" id="GO:0000287">
    <property type="term" value="F:magnesium ion binding"/>
    <property type="evidence" value="ECO:0007669"/>
    <property type="project" value="InterPro"/>
</dbReference>
<dbReference type="GO" id="GO:0030145">
    <property type="term" value="F:manganese ion binding"/>
    <property type="evidence" value="ECO:0007669"/>
    <property type="project" value="UniProtKB-UniRule"/>
</dbReference>
<dbReference type="GO" id="GO:0008973">
    <property type="term" value="F:phosphopentomutase activity"/>
    <property type="evidence" value="ECO:0007669"/>
    <property type="project" value="UniProtKB-UniRule"/>
</dbReference>
<dbReference type="GO" id="GO:0006018">
    <property type="term" value="P:2-deoxyribose 1-phosphate catabolic process"/>
    <property type="evidence" value="ECO:0007669"/>
    <property type="project" value="UniProtKB-UniRule"/>
</dbReference>
<dbReference type="GO" id="GO:0006015">
    <property type="term" value="P:5-phosphoribose 1-diphosphate biosynthetic process"/>
    <property type="evidence" value="ECO:0007669"/>
    <property type="project" value="UniProtKB-UniPathway"/>
</dbReference>
<dbReference type="GO" id="GO:0043094">
    <property type="term" value="P:metabolic compound salvage"/>
    <property type="evidence" value="ECO:0007669"/>
    <property type="project" value="InterPro"/>
</dbReference>
<dbReference type="GO" id="GO:0009117">
    <property type="term" value="P:nucleotide metabolic process"/>
    <property type="evidence" value="ECO:0007669"/>
    <property type="project" value="InterPro"/>
</dbReference>
<dbReference type="CDD" id="cd16009">
    <property type="entry name" value="PPM"/>
    <property type="match status" value="1"/>
</dbReference>
<dbReference type="FunFam" id="3.30.70.1250:FF:000001">
    <property type="entry name" value="Phosphopentomutase"/>
    <property type="match status" value="1"/>
</dbReference>
<dbReference type="Gene3D" id="3.40.720.10">
    <property type="entry name" value="Alkaline Phosphatase, subunit A"/>
    <property type="match status" value="1"/>
</dbReference>
<dbReference type="Gene3D" id="3.30.70.1250">
    <property type="entry name" value="Phosphopentomutase"/>
    <property type="match status" value="1"/>
</dbReference>
<dbReference type="HAMAP" id="MF_00740">
    <property type="entry name" value="Phosphopentomut"/>
    <property type="match status" value="1"/>
</dbReference>
<dbReference type="InterPro" id="IPR017850">
    <property type="entry name" value="Alkaline_phosphatase_core_sf"/>
</dbReference>
<dbReference type="InterPro" id="IPR010045">
    <property type="entry name" value="DeoB"/>
</dbReference>
<dbReference type="InterPro" id="IPR006124">
    <property type="entry name" value="Metalloenzyme"/>
</dbReference>
<dbReference type="InterPro" id="IPR024052">
    <property type="entry name" value="Phosphopentomutase_DeoB_cap_sf"/>
</dbReference>
<dbReference type="NCBIfam" id="TIGR01696">
    <property type="entry name" value="deoB"/>
    <property type="match status" value="1"/>
</dbReference>
<dbReference type="NCBIfam" id="NF003766">
    <property type="entry name" value="PRK05362.1"/>
    <property type="match status" value="1"/>
</dbReference>
<dbReference type="PANTHER" id="PTHR21110">
    <property type="entry name" value="PHOSPHOPENTOMUTASE"/>
    <property type="match status" value="1"/>
</dbReference>
<dbReference type="PANTHER" id="PTHR21110:SF0">
    <property type="entry name" value="PHOSPHOPENTOMUTASE"/>
    <property type="match status" value="1"/>
</dbReference>
<dbReference type="Pfam" id="PF01676">
    <property type="entry name" value="Metalloenzyme"/>
    <property type="match status" value="1"/>
</dbReference>
<dbReference type="PIRSF" id="PIRSF001491">
    <property type="entry name" value="Ppentomutase"/>
    <property type="match status" value="1"/>
</dbReference>
<dbReference type="SUPFAM" id="SSF53649">
    <property type="entry name" value="Alkaline phosphatase-like"/>
    <property type="match status" value="1"/>
</dbReference>
<dbReference type="SUPFAM" id="SSF143856">
    <property type="entry name" value="DeoB insert domain-like"/>
    <property type="match status" value="1"/>
</dbReference>
<accession>C4LAY9</accession>
<comment type="function">
    <text evidence="1">Isomerase that catalyzes the conversion of deoxy-ribose 1-phosphate (dRib-1-P) and ribose 1-phosphate (Rib-1-P) to deoxy-ribose 5-phosphate (dRib-5-P) and ribose 5-phosphate (Rib-5-P), respectively.</text>
</comment>
<comment type="catalytic activity">
    <reaction evidence="1">
        <text>2-deoxy-alpha-D-ribose 1-phosphate = 2-deoxy-D-ribose 5-phosphate</text>
        <dbReference type="Rhea" id="RHEA:27658"/>
        <dbReference type="ChEBI" id="CHEBI:57259"/>
        <dbReference type="ChEBI" id="CHEBI:62877"/>
        <dbReference type="EC" id="5.4.2.7"/>
    </reaction>
</comment>
<comment type="catalytic activity">
    <reaction evidence="1">
        <text>alpha-D-ribose 1-phosphate = D-ribose 5-phosphate</text>
        <dbReference type="Rhea" id="RHEA:18793"/>
        <dbReference type="ChEBI" id="CHEBI:57720"/>
        <dbReference type="ChEBI" id="CHEBI:78346"/>
        <dbReference type="EC" id="5.4.2.7"/>
    </reaction>
</comment>
<comment type="cofactor">
    <cofactor evidence="1">
        <name>Mn(2+)</name>
        <dbReference type="ChEBI" id="CHEBI:29035"/>
    </cofactor>
    <text evidence="1">Binds 2 manganese ions.</text>
</comment>
<comment type="pathway">
    <text evidence="1">Carbohydrate degradation; 2-deoxy-D-ribose 1-phosphate degradation; D-glyceraldehyde 3-phosphate and acetaldehyde from 2-deoxy-alpha-D-ribose 1-phosphate: step 1/2.</text>
</comment>
<comment type="subcellular location">
    <subcellularLocation>
        <location evidence="1">Cytoplasm</location>
    </subcellularLocation>
</comment>
<comment type="similarity">
    <text evidence="1">Belongs to the phosphopentomutase family.</text>
</comment>
<sequence>MKRTIILMLDSLGIGASADAVRFGDEGANTLGHIAQACVTGNADNGRKGPLTLPNLTRLGLAHACAASCGEFPAGLDASVTPIAAYGYARELSSGKDTPSGHWEMAGAPVLFDWGYFTDKQNSFPPELLDALVAQGNLPGYLGNCHASGTEILDRLGEEHMRSGKPIFYTSADSVFQIACHEETYGLDKLYELCKLARQLLEPYNIGRVIARPFVGSKAGEFKRTGNRHDYAVEPPMPTLLDRMKAAGGDVISIGKIADIYACCGITQQHKATGLDELWDMTLAQVKTAADQSIIFTNFVDFDSSYGHRRDVAGYAAALEYFDSRLPELLALLLPGDRVVLTADHGCDPIWTGTDHTREHVPVIFYGDTVQPQDLGMRDTFADIGQTIAAYHGLPVLDYGSNCLPEHH</sequence>
<evidence type="ECO:0000255" key="1">
    <source>
        <dbReference type="HAMAP-Rule" id="MF_00740"/>
    </source>
</evidence>
<protein>
    <recommendedName>
        <fullName evidence="1">Phosphopentomutase</fullName>
        <ecNumber evidence="1">5.4.2.7</ecNumber>
    </recommendedName>
    <alternativeName>
        <fullName evidence="1">Phosphodeoxyribomutase</fullName>
    </alternativeName>
</protein>
<organism>
    <name type="scientific">Tolumonas auensis (strain DSM 9187 / NBRC 110442 / TA 4)</name>
    <dbReference type="NCBI Taxonomy" id="595494"/>
    <lineage>
        <taxon>Bacteria</taxon>
        <taxon>Pseudomonadati</taxon>
        <taxon>Pseudomonadota</taxon>
        <taxon>Gammaproteobacteria</taxon>
        <taxon>Aeromonadales</taxon>
        <taxon>Aeromonadaceae</taxon>
        <taxon>Tolumonas</taxon>
    </lineage>
</organism>
<reference key="1">
    <citation type="submission" date="2009-05" db="EMBL/GenBank/DDBJ databases">
        <title>Complete sequence of Tolumonas auensis DSM 9187.</title>
        <authorList>
            <consortium name="US DOE Joint Genome Institute"/>
            <person name="Lucas S."/>
            <person name="Copeland A."/>
            <person name="Lapidus A."/>
            <person name="Glavina del Rio T."/>
            <person name="Tice H."/>
            <person name="Bruce D."/>
            <person name="Goodwin L."/>
            <person name="Pitluck S."/>
            <person name="Chertkov O."/>
            <person name="Brettin T."/>
            <person name="Detter J.C."/>
            <person name="Han C."/>
            <person name="Larimer F."/>
            <person name="Land M."/>
            <person name="Hauser L."/>
            <person name="Kyrpides N."/>
            <person name="Mikhailova N."/>
            <person name="Spring S."/>
            <person name="Beller H."/>
        </authorList>
    </citation>
    <scope>NUCLEOTIDE SEQUENCE [LARGE SCALE GENOMIC DNA]</scope>
    <source>
        <strain>DSM 9187 / NBRC 110442 / TA 4</strain>
    </source>
</reference>
<gene>
    <name evidence="1" type="primary">deoB</name>
    <name type="ordered locus">Tola_2598</name>
</gene>
<feature type="chain" id="PRO_1000212815" description="Phosphopentomutase">
    <location>
        <begin position="1"/>
        <end position="408"/>
    </location>
</feature>
<feature type="binding site" evidence="1">
    <location>
        <position position="10"/>
    </location>
    <ligand>
        <name>Mn(2+)</name>
        <dbReference type="ChEBI" id="CHEBI:29035"/>
        <label>1</label>
    </ligand>
</feature>
<feature type="binding site" evidence="1">
    <location>
        <position position="303"/>
    </location>
    <ligand>
        <name>Mn(2+)</name>
        <dbReference type="ChEBI" id="CHEBI:29035"/>
        <label>2</label>
    </ligand>
</feature>
<feature type="binding site" evidence="1">
    <location>
        <position position="308"/>
    </location>
    <ligand>
        <name>Mn(2+)</name>
        <dbReference type="ChEBI" id="CHEBI:29035"/>
        <label>2</label>
    </ligand>
</feature>
<feature type="binding site" evidence="1">
    <location>
        <position position="344"/>
    </location>
    <ligand>
        <name>Mn(2+)</name>
        <dbReference type="ChEBI" id="CHEBI:29035"/>
        <label>1</label>
    </ligand>
</feature>
<feature type="binding site" evidence="1">
    <location>
        <position position="345"/>
    </location>
    <ligand>
        <name>Mn(2+)</name>
        <dbReference type="ChEBI" id="CHEBI:29035"/>
        <label>1</label>
    </ligand>
</feature>
<feature type="binding site" evidence="1">
    <location>
        <position position="356"/>
    </location>
    <ligand>
        <name>Mn(2+)</name>
        <dbReference type="ChEBI" id="CHEBI:29035"/>
        <label>2</label>
    </ligand>
</feature>
<name>DEOB_TOLAT</name>
<proteinExistence type="inferred from homology"/>